<protein>
    <recommendedName>
        <fullName evidence="1">dITP/XTP pyrophosphatase</fullName>
        <ecNumber evidence="1">3.6.1.66</ecNumber>
    </recommendedName>
    <alternativeName>
        <fullName evidence="1">Non-canonical purine NTP pyrophosphatase</fullName>
    </alternativeName>
    <alternativeName>
        <fullName evidence="1">Non-standard purine NTP pyrophosphatase</fullName>
    </alternativeName>
    <alternativeName>
        <fullName evidence="1">Nucleoside-triphosphate diphosphatase</fullName>
    </alternativeName>
    <alternativeName>
        <fullName evidence="1">Nucleoside-triphosphate pyrophosphatase</fullName>
        <shortName evidence="1">NTPase</shortName>
    </alternativeName>
</protein>
<feature type="chain" id="PRO_0000178193" description="dITP/XTP pyrophosphatase">
    <location>
        <begin position="1"/>
        <end position="208"/>
    </location>
</feature>
<feature type="active site" description="Proton acceptor" evidence="1">
    <location>
        <position position="76"/>
    </location>
</feature>
<feature type="binding site" evidence="1">
    <location>
        <begin position="11"/>
        <end position="16"/>
    </location>
    <ligand>
        <name>substrate</name>
    </ligand>
</feature>
<feature type="binding site" evidence="1">
    <location>
        <position position="76"/>
    </location>
    <ligand>
        <name>Mg(2+)</name>
        <dbReference type="ChEBI" id="CHEBI:18420"/>
    </ligand>
</feature>
<feature type="binding site" evidence="1">
    <location>
        <position position="77"/>
    </location>
    <ligand>
        <name>substrate</name>
    </ligand>
</feature>
<feature type="binding site" evidence="1">
    <location>
        <begin position="158"/>
        <end position="161"/>
    </location>
    <ligand>
        <name>substrate</name>
    </ligand>
</feature>
<feature type="binding site" evidence="1">
    <location>
        <position position="184"/>
    </location>
    <ligand>
        <name>substrate</name>
    </ligand>
</feature>
<feature type="binding site" evidence="1">
    <location>
        <begin position="189"/>
        <end position="190"/>
    </location>
    <ligand>
        <name>substrate</name>
    </ligand>
</feature>
<sequence length="208" mass="21820">MALVTKLLVASRNWKKLAELRRVLDNAGLSGLTLVSLNDVVPFDEAPEAGATFEDNALAKARDAFAATGLASVADDSGLEAAALGGMPGVLSARWSGSYGDDAGNTALLLAQLCDVPDERRSAAFVSACALVSESDEVVVRGVWPGTIAREPRGYGGFGYDSIFIPDGPGLGGRTVAQLRPAEKDAFSHRFRALTLLMPALRVLAMRT</sequence>
<evidence type="ECO:0000255" key="1">
    <source>
        <dbReference type="HAMAP-Rule" id="MF_01405"/>
    </source>
</evidence>
<evidence type="ECO:0000305" key="2"/>
<name>IXTPA_MYCLE</name>
<reference key="1">
    <citation type="submission" date="1994-09" db="EMBL/GenBank/DDBJ databases">
        <authorList>
            <person name="Smith D.R."/>
            <person name="Robison K."/>
        </authorList>
    </citation>
    <scope>NUCLEOTIDE SEQUENCE [GENOMIC DNA]</scope>
</reference>
<reference key="2">
    <citation type="journal article" date="2001" name="Nature">
        <title>Massive gene decay in the leprosy bacillus.</title>
        <authorList>
            <person name="Cole S.T."/>
            <person name="Eiglmeier K."/>
            <person name="Parkhill J."/>
            <person name="James K.D."/>
            <person name="Thomson N.R."/>
            <person name="Wheeler P.R."/>
            <person name="Honore N."/>
            <person name="Garnier T."/>
            <person name="Churcher C.M."/>
            <person name="Harris D.E."/>
            <person name="Mungall K.L."/>
            <person name="Basham D."/>
            <person name="Brown D."/>
            <person name="Chillingworth T."/>
            <person name="Connor R."/>
            <person name="Davies R.M."/>
            <person name="Devlin K."/>
            <person name="Duthoy S."/>
            <person name="Feltwell T."/>
            <person name="Fraser A."/>
            <person name="Hamlin N."/>
            <person name="Holroyd S."/>
            <person name="Hornsby T."/>
            <person name="Jagels K."/>
            <person name="Lacroix C."/>
            <person name="Maclean J."/>
            <person name="Moule S."/>
            <person name="Murphy L.D."/>
            <person name="Oliver K."/>
            <person name="Quail M.A."/>
            <person name="Rajandream M.A."/>
            <person name="Rutherford K.M."/>
            <person name="Rutter S."/>
            <person name="Seeger K."/>
            <person name="Simon S."/>
            <person name="Simmonds M."/>
            <person name="Skelton J."/>
            <person name="Squares R."/>
            <person name="Squares S."/>
            <person name="Stevens K."/>
            <person name="Taylor K."/>
            <person name="Whitehead S."/>
            <person name="Woodward J.R."/>
            <person name="Barrell B.G."/>
        </authorList>
    </citation>
    <scope>NUCLEOTIDE SEQUENCE [LARGE SCALE GENOMIC DNA]</scope>
    <source>
        <strain>TN</strain>
    </source>
</reference>
<keyword id="KW-0378">Hydrolase</keyword>
<keyword id="KW-0460">Magnesium</keyword>
<keyword id="KW-0479">Metal-binding</keyword>
<keyword id="KW-0546">Nucleotide metabolism</keyword>
<keyword id="KW-0547">Nucleotide-binding</keyword>
<keyword id="KW-1185">Reference proteome</keyword>
<comment type="function">
    <text evidence="1">Pyrophosphatase that catalyzes the hydrolysis of nucleoside triphosphates to their monophosphate derivatives, with a high preference for the non-canonical purine nucleotides XTP (xanthosine triphosphate), dITP (deoxyinosine triphosphate) and ITP. Seems to function as a house-cleaning enzyme that removes non-canonical purine nucleotides from the nucleotide pool, thus preventing their incorporation into DNA/RNA and avoiding chromosomal lesions.</text>
</comment>
<comment type="catalytic activity">
    <reaction evidence="1">
        <text>XTP + H2O = XMP + diphosphate + H(+)</text>
        <dbReference type="Rhea" id="RHEA:28610"/>
        <dbReference type="ChEBI" id="CHEBI:15377"/>
        <dbReference type="ChEBI" id="CHEBI:15378"/>
        <dbReference type="ChEBI" id="CHEBI:33019"/>
        <dbReference type="ChEBI" id="CHEBI:57464"/>
        <dbReference type="ChEBI" id="CHEBI:61314"/>
        <dbReference type="EC" id="3.6.1.66"/>
    </reaction>
</comment>
<comment type="catalytic activity">
    <reaction evidence="1">
        <text>dITP + H2O = dIMP + diphosphate + H(+)</text>
        <dbReference type="Rhea" id="RHEA:28342"/>
        <dbReference type="ChEBI" id="CHEBI:15377"/>
        <dbReference type="ChEBI" id="CHEBI:15378"/>
        <dbReference type="ChEBI" id="CHEBI:33019"/>
        <dbReference type="ChEBI" id="CHEBI:61194"/>
        <dbReference type="ChEBI" id="CHEBI:61382"/>
        <dbReference type="EC" id="3.6.1.66"/>
    </reaction>
</comment>
<comment type="catalytic activity">
    <reaction evidence="1">
        <text>ITP + H2O = IMP + diphosphate + H(+)</text>
        <dbReference type="Rhea" id="RHEA:29399"/>
        <dbReference type="ChEBI" id="CHEBI:15377"/>
        <dbReference type="ChEBI" id="CHEBI:15378"/>
        <dbReference type="ChEBI" id="CHEBI:33019"/>
        <dbReference type="ChEBI" id="CHEBI:58053"/>
        <dbReference type="ChEBI" id="CHEBI:61402"/>
        <dbReference type="EC" id="3.6.1.66"/>
    </reaction>
</comment>
<comment type="cofactor">
    <cofactor evidence="1">
        <name>Mg(2+)</name>
        <dbReference type="ChEBI" id="CHEBI:18420"/>
    </cofactor>
    <text evidence="1">Binds 1 Mg(2+) ion per subunit.</text>
</comment>
<comment type="subunit">
    <text evidence="1">Homodimer.</text>
</comment>
<comment type="similarity">
    <text evidence="1">Belongs to the HAM1 NTPase family.</text>
</comment>
<comment type="sequence caution" evidence="2">
    <conflict type="erroneous initiation">
        <sequence resource="EMBL-CDS" id="AAA50892"/>
    </conflict>
</comment>
<comment type="sequence caution" evidence="2">
    <conflict type="erroneous initiation">
        <sequence resource="EMBL-CDS" id="CAB39141"/>
    </conflict>
</comment>
<comment type="sequence caution" evidence="2">
    <conflict type="erroneous initiation">
        <sequence resource="EMBL-CDS" id="CAC31556"/>
    </conflict>
</comment>
<gene>
    <name type="ordered locus">ML1175</name>
    <name type="ORF">B1549_C2_213</name>
    <name type="ORF">MLCB1701.01</name>
</gene>
<dbReference type="EC" id="3.6.1.66" evidence="1"/>
<dbReference type="EMBL" id="U00014">
    <property type="protein sequence ID" value="AAA50892.1"/>
    <property type="status" value="ALT_INIT"/>
    <property type="molecule type" value="Genomic_DNA"/>
</dbReference>
<dbReference type="EMBL" id="AL049191">
    <property type="protein sequence ID" value="CAB39141.1"/>
    <property type="status" value="ALT_INIT"/>
    <property type="molecule type" value="Genomic_DNA"/>
</dbReference>
<dbReference type="EMBL" id="AL583921">
    <property type="protein sequence ID" value="CAC31556.1"/>
    <property type="status" value="ALT_INIT"/>
    <property type="molecule type" value="Genomic_DNA"/>
</dbReference>
<dbReference type="PIR" id="A87056">
    <property type="entry name" value="A87056"/>
</dbReference>
<dbReference type="PIR" id="S72787">
    <property type="entry name" value="S72787"/>
</dbReference>
<dbReference type="SMR" id="P52063"/>
<dbReference type="STRING" id="272631.gene:17575005"/>
<dbReference type="KEGG" id="mle:ML1175"/>
<dbReference type="Leproma" id="ML1175"/>
<dbReference type="eggNOG" id="COG0127">
    <property type="taxonomic scope" value="Bacteria"/>
</dbReference>
<dbReference type="HOGENOM" id="CLU_082080_0_1_11"/>
<dbReference type="Proteomes" id="UP000000806">
    <property type="component" value="Chromosome"/>
</dbReference>
<dbReference type="GO" id="GO:0005829">
    <property type="term" value="C:cytosol"/>
    <property type="evidence" value="ECO:0007669"/>
    <property type="project" value="TreeGrafter"/>
</dbReference>
<dbReference type="GO" id="GO:0035870">
    <property type="term" value="F:dITP diphosphatase activity"/>
    <property type="evidence" value="ECO:0007669"/>
    <property type="project" value="RHEA"/>
</dbReference>
<dbReference type="GO" id="GO:0036220">
    <property type="term" value="F:ITP diphosphatase activity"/>
    <property type="evidence" value="ECO:0007669"/>
    <property type="project" value="UniProtKB-EC"/>
</dbReference>
<dbReference type="GO" id="GO:0046872">
    <property type="term" value="F:metal ion binding"/>
    <property type="evidence" value="ECO:0007669"/>
    <property type="project" value="UniProtKB-KW"/>
</dbReference>
<dbReference type="GO" id="GO:0000166">
    <property type="term" value="F:nucleotide binding"/>
    <property type="evidence" value="ECO:0007669"/>
    <property type="project" value="UniProtKB-KW"/>
</dbReference>
<dbReference type="GO" id="GO:0017111">
    <property type="term" value="F:ribonucleoside triphosphate phosphatase activity"/>
    <property type="evidence" value="ECO:0007669"/>
    <property type="project" value="InterPro"/>
</dbReference>
<dbReference type="GO" id="GO:0036222">
    <property type="term" value="F:XTP diphosphatase activity"/>
    <property type="evidence" value="ECO:0007669"/>
    <property type="project" value="RHEA"/>
</dbReference>
<dbReference type="GO" id="GO:0009117">
    <property type="term" value="P:nucleotide metabolic process"/>
    <property type="evidence" value="ECO:0007669"/>
    <property type="project" value="UniProtKB-KW"/>
</dbReference>
<dbReference type="GO" id="GO:0009146">
    <property type="term" value="P:purine nucleoside triphosphate catabolic process"/>
    <property type="evidence" value="ECO:0007669"/>
    <property type="project" value="UniProtKB-UniRule"/>
</dbReference>
<dbReference type="CDD" id="cd00515">
    <property type="entry name" value="HAM1"/>
    <property type="match status" value="1"/>
</dbReference>
<dbReference type="FunFam" id="3.90.950.10:FF:000001">
    <property type="entry name" value="dITP/XTP pyrophosphatase"/>
    <property type="match status" value="1"/>
</dbReference>
<dbReference type="Gene3D" id="3.90.950.10">
    <property type="match status" value="1"/>
</dbReference>
<dbReference type="HAMAP" id="MF_01405">
    <property type="entry name" value="Non_canon_purine_NTPase"/>
    <property type="match status" value="1"/>
</dbReference>
<dbReference type="InterPro" id="IPR020922">
    <property type="entry name" value="dITP/XTP_pyrophosphatase"/>
</dbReference>
<dbReference type="InterPro" id="IPR029001">
    <property type="entry name" value="ITPase-like_fam"/>
</dbReference>
<dbReference type="InterPro" id="IPR002637">
    <property type="entry name" value="RdgB/HAM1"/>
</dbReference>
<dbReference type="PANTHER" id="PTHR11067:SF9">
    <property type="entry name" value="INOSINE TRIPHOSPHATE PYROPHOSPHATASE"/>
    <property type="match status" value="1"/>
</dbReference>
<dbReference type="PANTHER" id="PTHR11067">
    <property type="entry name" value="INOSINE TRIPHOSPHATE PYROPHOSPHATASE/HAM1 PROTEIN"/>
    <property type="match status" value="1"/>
</dbReference>
<dbReference type="Pfam" id="PF01725">
    <property type="entry name" value="Ham1p_like"/>
    <property type="match status" value="1"/>
</dbReference>
<dbReference type="SUPFAM" id="SSF52972">
    <property type="entry name" value="ITPase-like"/>
    <property type="match status" value="1"/>
</dbReference>
<organism>
    <name type="scientific">Mycobacterium leprae (strain TN)</name>
    <dbReference type="NCBI Taxonomy" id="272631"/>
    <lineage>
        <taxon>Bacteria</taxon>
        <taxon>Bacillati</taxon>
        <taxon>Actinomycetota</taxon>
        <taxon>Actinomycetes</taxon>
        <taxon>Mycobacteriales</taxon>
        <taxon>Mycobacteriaceae</taxon>
        <taxon>Mycobacterium</taxon>
    </lineage>
</organism>
<accession>P52063</accession>
<accession>P53428</accession>
<accession>Q9S383</accession>
<proteinExistence type="inferred from homology"/>